<feature type="chain" id="PRO_1000018730" description="Phosphoribosylaminoimidazole-succinocarboxamide synthase">
    <location>
        <begin position="1"/>
        <end position="238"/>
    </location>
</feature>
<dbReference type="EC" id="6.3.2.6" evidence="1"/>
<dbReference type="EMBL" id="CP000300">
    <property type="protein sequence ID" value="ABE52918.1"/>
    <property type="molecule type" value="Genomic_DNA"/>
</dbReference>
<dbReference type="RefSeq" id="WP_011500058.1">
    <property type="nucleotide sequence ID" value="NC_007955.1"/>
</dbReference>
<dbReference type="SMR" id="Q12UF8"/>
<dbReference type="STRING" id="259564.Mbur_2042"/>
<dbReference type="GeneID" id="3997424"/>
<dbReference type="KEGG" id="mbu:Mbur_2042"/>
<dbReference type="HOGENOM" id="CLU_061495_2_0_2"/>
<dbReference type="OrthoDB" id="10775at2157"/>
<dbReference type="UniPathway" id="UPA00074">
    <property type="reaction ID" value="UER00131"/>
</dbReference>
<dbReference type="Proteomes" id="UP000001979">
    <property type="component" value="Chromosome"/>
</dbReference>
<dbReference type="GO" id="GO:0005524">
    <property type="term" value="F:ATP binding"/>
    <property type="evidence" value="ECO:0007669"/>
    <property type="project" value="UniProtKB-KW"/>
</dbReference>
<dbReference type="GO" id="GO:0004639">
    <property type="term" value="F:phosphoribosylaminoimidazolesuccinocarboxamide synthase activity"/>
    <property type="evidence" value="ECO:0007669"/>
    <property type="project" value="UniProtKB-UniRule"/>
</dbReference>
<dbReference type="GO" id="GO:0006189">
    <property type="term" value="P:'de novo' IMP biosynthetic process"/>
    <property type="evidence" value="ECO:0007669"/>
    <property type="project" value="UniProtKB-UniRule"/>
</dbReference>
<dbReference type="GO" id="GO:0009236">
    <property type="term" value="P:cobalamin biosynthetic process"/>
    <property type="evidence" value="ECO:0007669"/>
    <property type="project" value="InterPro"/>
</dbReference>
<dbReference type="CDD" id="cd01415">
    <property type="entry name" value="SAICAR_synt_PurC"/>
    <property type="match status" value="1"/>
</dbReference>
<dbReference type="FunFam" id="3.30.200.20:FF:000086">
    <property type="entry name" value="Phosphoribosylaminoimidazole-succinocarboxamide synthase"/>
    <property type="match status" value="1"/>
</dbReference>
<dbReference type="FunFam" id="3.30.470.20:FF:000006">
    <property type="entry name" value="Phosphoribosylaminoimidazole-succinocarboxamide synthase"/>
    <property type="match status" value="1"/>
</dbReference>
<dbReference type="Gene3D" id="3.30.470.20">
    <property type="entry name" value="ATP-grasp fold, B domain"/>
    <property type="match status" value="1"/>
</dbReference>
<dbReference type="Gene3D" id="3.30.200.20">
    <property type="entry name" value="Phosphorylase Kinase, domain 1"/>
    <property type="match status" value="1"/>
</dbReference>
<dbReference type="HAMAP" id="MF_00137">
    <property type="entry name" value="SAICAR_synth"/>
    <property type="match status" value="1"/>
</dbReference>
<dbReference type="InterPro" id="IPR028923">
    <property type="entry name" value="SAICAR_synt/ADE2_N"/>
</dbReference>
<dbReference type="InterPro" id="IPR033934">
    <property type="entry name" value="SAICAR_synt_PurC"/>
</dbReference>
<dbReference type="InterPro" id="IPR001636">
    <property type="entry name" value="SAICAR_synth"/>
</dbReference>
<dbReference type="InterPro" id="IPR050089">
    <property type="entry name" value="SAICAR_synthetase"/>
</dbReference>
<dbReference type="InterPro" id="IPR018236">
    <property type="entry name" value="SAICAR_synthetase_CS"/>
</dbReference>
<dbReference type="NCBIfam" id="TIGR00081">
    <property type="entry name" value="purC"/>
    <property type="match status" value="1"/>
</dbReference>
<dbReference type="PANTHER" id="PTHR43599">
    <property type="entry name" value="MULTIFUNCTIONAL PROTEIN ADE2"/>
    <property type="match status" value="1"/>
</dbReference>
<dbReference type="PANTHER" id="PTHR43599:SF3">
    <property type="entry name" value="SI:DKEY-6E2.2"/>
    <property type="match status" value="1"/>
</dbReference>
<dbReference type="Pfam" id="PF01259">
    <property type="entry name" value="SAICAR_synt"/>
    <property type="match status" value="1"/>
</dbReference>
<dbReference type="SUPFAM" id="SSF56104">
    <property type="entry name" value="SAICAR synthase-like"/>
    <property type="match status" value="1"/>
</dbReference>
<dbReference type="PROSITE" id="PS01058">
    <property type="entry name" value="SAICAR_SYNTHETASE_2"/>
    <property type="match status" value="1"/>
</dbReference>
<protein>
    <recommendedName>
        <fullName evidence="1">Phosphoribosylaminoimidazole-succinocarboxamide synthase</fullName>
        <ecNumber evidence="1">6.3.2.6</ecNumber>
    </recommendedName>
    <alternativeName>
        <fullName evidence="1">SAICAR synthetase</fullName>
    </alternativeName>
</protein>
<accession>Q12UF8</accession>
<gene>
    <name evidence="1" type="primary">purC</name>
    <name type="ordered locus">Mbur_2042</name>
</gene>
<comment type="catalytic activity">
    <reaction evidence="1">
        <text>5-amino-1-(5-phospho-D-ribosyl)imidazole-4-carboxylate + L-aspartate + ATP = (2S)-2-[5-amino-1-(5-phospho-beta-D-ribosyl)imidazole-4-carboxamido]succinate + ADP + phosphate + 2 H(+)</text>
        <dbReference type="Rhea" id="RHEA:22628"/>
        <dbReference type="ChEBI" id="CHEBI:15378"/>
        <dbReference type="ChEBI" id="CHEBI:29991"/>
        <dbReference type="ChEBI" id="CHEBI:30616"/>
        <dbReference type="ChEBI" id="CHEBI:43474"/>
        <dbReference type="ChEBI" id="CHEBI:58443"/>
        <dbReference type="ChEBI" id="CHEBI:77657"/>
        <dbReference type="ChEBI" id="CHEBI:456216"/>
        <dbReference type="EC" id="6.3.2.6"/>
    </reaction>
</comment>
<comment type="pathway">
    <text evidence="1">Purine metabolism; IMP biosynthesis via de novo pathway; 5-amino-1-(5-phospho-D-ribosyl)imidazole-4-carboxamide from 5-amino-1-(5-phospho-D-ribosyl)imidazole-4-carboxylate: step 1/2.</text>
</comment>
<comment type="similarity">
    <text evidence="1">Belongs to the SAICAR synthetase family.</text>
</comment>
<reference key="1">
    <citation type="journal article" date="2009" name="ISME J.">
        <title>The genome sequence of the psychrophilic archaeon, Methanococcoides burtonii: the role of genome evolution in cold adaptation.</title>
        <authorList>
            <person name="Allen M.A."/>
            <person name="Lauro F.M."/>
            <person name="Williams T.J."/>
            <person name="Burg D."/>
            <person name="Siddiqui K.S."/>
            <person name="De Francisci D."/>
            <person name="Chong K.W."/>
            <person name="Pilak O."/>
            <person name="Chew H.H."/>
            <person name="De Maere M.Z."/>
            <person name="Ting L."/>
            <person name="Katrib M."/>
            <person name="Ng C."/>
            <person name="Sowers K.R."/>
            <person name="Galperin M.Y."/>
            <person name="Anderson I.J."/>
            <person name="Ivanova N."/>
            <person name="Dalin E."/>
            <person name="Martinez M."/>
            <person name="Lapidus A."/>
            <person name="Hauser L."/>
            <person name="Land M."/>
            <person name="Thomas T."/>
            <person name="Cavicchioli R."/>
        </authorList>
    </citation>
    <scope>NUCLEOTIDE SEQUENCE [LARGE SCALE GENOMIC DNA]</scope>
    <source>
        <strain>DSM 6242 / NBRC 107633 / OCM 468 / ACE-M</strain>
    </source>
</reference>
<sequence>MKTEELYSGKAKTIYKTENPNELISEFRDSLTAFDGKKKSEATNKGYYNAQISKKIFEMLEEEGIKTHYLGMVSGNEMLVKKVDIILIEVIPRNIAAGSITRKYPVEEGTVFKEPVLVFDYKSDEFGDPMINDDIAVVMGIATREEIDFIRSMALKINAILKSYLESNGFLLPDFKLEFGRVDGEIVLADEISCDTCRFWDVETGESMDKDLFRFDKGDLSKAYEKVARRLVPEIFEE</sequence>
<organism>
    <name type="scientific">Methanococcoides burtonii (strain DSM 6242 / NBRC 107633 / OCM 468 / ACE-M)</name>
    <dbReference type="NCBI Taxonomy" id="259564"/>
    <lineage>
        <taxon>Archaea</taxon>
        <taxon>Methanobacteriati</taxon>
        <taxon>Methanobacteriota</taxon>
        <taxon>Stenosarchaea group</taxon>
        <taxon>Methanomicrobia</taxon>
        <taxon>Methanosarcinales</taxon>
        <taxon>Methanosarcinaceae</taxon>
        <taxon>Methanococcoides</taxon>
    </lineage>
</organism>
<proteinExistence type="inferred from homology"/>
<evidence type="ECO:0000255" key="1">
    <source>
        <dbReference type="HAMAP-Rule" id="MF_00137"/>
    </source>
</evidence>
<keyword id="KW-0067">ATP-binding</keyword>
<keyword id="KW-0436">Ligase</keyword>
<keyword id="KW-0547">Nucleotide-binding</keyword>
<keyword id="KW-0658">Purine biosynthesis</keyword>
<name>PUR7_METBU</name>